<name>GR32A_DROME</name>
<feature type="chain" id="PRO_0000216503" description="Gustatory and pheromone receptor 32a">
    <location>
        <begin position="1"/>
        <end position="461"/>
    </location>
</feature>
<feature type="topological domain" description="Cytoplasmic" evidence="1">
    <location>
        <begin position="1"/>
        <end position="100"/>
    </location>
</feature>
<feature type="transmembrane region" description="Helical; Name=1" evidence="2">
    <location>
        <begin position="101"/>
        <end position="121"/>
    </location>
</feature>
<feature type="topological domain" description="Extracellular" evidence="1">
    <location>
        <begin position="122"/>
        <end position="127"/>
    </location>
</feature>
<feature type="transmembrane region" description="Helical; Name=2" evidence="2">
    <location>
        <begin position="128"/>
        <end position="148"/>
    </location>
</feature>
<feature type="topological domain" description="Cytoplasmic" evidence="1">
    <location>
        <begin position="149"/>
        <end position="180"/>
    </location>
</feature>
<feature type="transmembrane region" description="Helical; Name=3" evidence="2">
    <location>
        <begin position="181"/>
        <end position="201"/>
    </location>
</feature>
<feature type="topological domain" description="Extracellular" evidence="1">
    <location>
        <begin position="202"/>
        <end position="214"/>
    </location>
</feature>
<feature type="transmembrane region" description="Helical; Name=4" evidence="2">
    <location>
        <begin position="215"/>
        <end position="235"/>
    </location>
</feature>
<feature type="topological domain" description="Cytoplasmic" evidence="1">
    <location>
        <begin position="236"/>
        <end position="317"/>
    </location>
</feature>
<feature type="transmembrane region" description="Helical; Name=5" evidence="2">
    <location>
        <begin position="318"/>
        <end position="338"/>
    </location>
</feature>
<feature type="topological domain" description="Extracellular" evidence="1">
    <location>
        <begin position="339"/>
        <end position="348"/>
    </location>
</feature>
<feature type="transmembrane region" description="Helical; Name=6" evidence="2">
    <location>
        <begin position="349"/>
        <end position="369"/>
    </location>
</feature>
<feature type="topological domain" description="Cytoplasmic" evidence="1">
    <location>
        <begin position="370"/>
        <end position="414"/>
    </location>
</feature>
<feature type="transmembrane region" description="Helical; Name=7" evidence="2">
    <location>
        <begin position="415"/>
        <end position="435"/>
    </location>
</feature>
<feature type="topological domain" description="Extracellular" evidence="1">
    <location>
        <begin position="436"/>
        <end position="461"/>
    </location>
</feature>
<proteinExistence type="evidence at transcript level"/>
<organism>
    <name type="scientific">Drosophila melanogaster</name>
    <name type="common">Fruit fly</name>
    <dbReference type="NCBI Taxonomy" id="7227"/>
    <lineage>
        <taxon>Eukaryota</taxon>
        <taxon>Metazoa</taxon>
        <taxon>Ecdysozoa</taxon>
        <taxon>Arthropoda</taxon>
        <taxon>Hexapoda</taxon>
        <taxon>Insecta</taxon>
        <taxon>Pterygota</taxon>
        <taxon>Neoptera</taxon>
        <taxon>Endopterygota</taxon>
        <taxon>Diptera</taxon>
        <taxon>Brachycera</taxon>
        <taxon>Muscomorpha</taxon>
        <taxon>Ephydroidea</taxon>
        <taxon>Drosophilidae</taxon>
        <taxon>Drosophila</taxon>
        <taxon>Sophophora</taxon>
    </lineage>
</organism>
<reference key="1">
    <citation type="journal article" date="2000" name="Science">
        <title>The genome sequence of Drosophila melanogaster.</title>
        <authorList>
            <person name="Adams M.D."/>
            <person name="Celniker S.E."/>
            <person name="Holt R.A."/>
            <person name="Evans C.A."/>
            <person name="Gocayne J.D."/>
            <person name="Amanatides P.G."/>
            <person name="Scherer S.E."/>
            <person name="Li P.W."/>
            <person name="Hoskins R.A."/>
            <person name="Galle R.F."/>
            <person name="George R.A."/>
            <person name="Lewis S.E."/>
            <person name="Richards S."/>
            <person name="Ashburner M."/>
            <person name="Henderson S.N."/>
            <person name="Sutton G.G."/>
            <person name="Wortman J.R."/>
            <person name="Yandell M.D."/>
            <person name="Zhang Q."/>
            <person name="Chen L.X."/>
            <person name="Brandon R.C."/>
            <person name="Rogers Y.-H.C."/>
            <person name="Blazej R.G."/>
            <person name="Champe M."/>
            <person name="Pfeiffer B.D."/>
            <person name="Wan K.H."/>
            <person name="Doyle C."/>
            <person name="Baxter E.G."/>
            <person name="Helt G."/>
            <person name="Nelson C.R."/>
            <person name="Miklos G.L.G."/>
            <person name="Abril J.F."/>
            <person name="Agbayani A."/>
            <person name="An H.-J."/>
            <person name="Andrews-Pfannkoch C."/>
            <person name="Baldwin D."/>
            <person name="Ballew R.M."/>
            <person name="Basu A."/>
            <person name="Baxendale J."/>
            <person name="Bayraktaroglu L."/>
            <person name="Beasley E.M."/>
            <person name="Beeson K.Y."/>
            <person name="Benos P.V."/>
            <person name="Berman B.P."/>
            <person name="Bhandari D."/>
            <person name="Bolshakov S."/>
            <person name="Borkova D."/>
            <person name="Botchan M.R."/>
            <person name="Bouck J."/>
            <person name="Brokstein P."/>
            <person name="Brottier P."/>
            <person name="Burtis K.C."/>
            <person name="Busam D.A."/>
            <person name="Butler H."/>
            <person name="Cadieu E."/>
            <person name="Center A."/>
            <person name="Chandra I."/>
            <person name="Cherry J.M."/>
            <person name="Cawley S."/>
            <person name="Dahlke C."/>
            <person name="Davenport L.B."/>
            <person name="Davies P."/>
            <person name="de Pablos B."/>
            <person name="Delcher A."/>
            <person name="Deng Z."/>
            <person name="Mays A.D."/>
            <person name="Dew I."/>
            <person name="Dietz S.M."/>
            <person name="Dodson K."/>
            <person name="Doup L.E."/>
            <person name="Downes M."/>
            <person name="Dugan-Rocha S."/>
            <person name="Dunkov B.C."/>
            <person name="Dunn P."/>
            <person name="Durbin K.J."/>
            <person name="Evangelista C.C."/>
            <person name="Ferraz C."/>
            <person name="Ferriera S."/>
            <person name="Fleischmann W."/>
            <person name="Fosler C."/>
            <person name="Gabrielian A.E."/>
            <person name="Garg N.S."/>
            <person name="Gelbart W.M."/>
            <person name="Glasser K."/>
            <person name="Glodek A."/>
            <person name="Gong F."/>
            <person name="Gorrell J.H."/>
            <person name="Gu Z."/>
            <person name="Guan P."/>
            <person name="Harris M."/>
            <person name="Harris N.L."/>
            <person name="Harvey D.A."/>
            <person name="Heiman T.J."/>
            <person name="Hernandez J.R."/>
            <person name="Houck J."/>
            <person name="Hostin D."/>
            <person name="Houston K.A."/>
            <person name="Howland T.J."/>
            <person name="Wei M.-H."/>
            <person name="Ibegwam C."/>
            <person name="Jalali M."/>
            <person name="Kalush F."/>
            <person name="Karpen G.H."/>
            <person name="Ke Z."/>
            <person name="Kennison J.A."/>
            <person name="Ketchum K.A."/>
            <person name="Kimmel B.E."/>
            <person name="Kodira C.D."/>
            <person name="Kraft C.L."/>
            <person name="Kravitz S."/>
            <person name="Kulp D."/>
            <person name="Lai Z."/>
            <person name="Lasko P."/>
            <person name="Lei Y."/>
            <person name="Levitsky A.A."/>
            <person name="Li J.H."/>
            <person name="Li Z."/>
            <person name="Liang Y."/>
            <person name="Lin X."/>
            <person name="Liu X."/>
            <person name="Mattei B."/>
            <person name="McIntosh T.C."/>
            <person name="McLeod M.P."/>
            <person name="McPherson D."/>
            <person name="Merkulov G."/>
            <person name="Milshina N.V."/>
            <person name="Mobarry C."/>
            <person name="Morris J."/>
            <person name="Moshrefi A."/>
            <person name="Mount S.M."/>
            <person name="Moy M."/>
            <person name="Murphy B."/>
            <person name="Murphy L."/>
            <person name="Muzny D.M."/>
            <person name="Nelson D.L."/>
            <person name="Nelson D.R."/>
            <person name="Nelson K.A."/>
            <person name="Nixon K."/>
            <person name="Nusskern D.R."/>
            <person name="Pacleb J.M."/>
            <person name="Palazzolo M."/>
            <person name="Pittman G.S."/>
            <person name="Pan S."/>
            <person name="Pollard J."/>
            <person name="Puri V."/>
            <person name="Reese M.G."/>
            <person name="Reinert K."/>
            <person name="Remington K."/>
            <person name="Saunders R.D.C."/>
            <person name="Scheeler F."/>
            <person name="Shen H."/>
            <person name="Shue B.C."/>
            <person name="Siden-Kiamos I."/>
            <person name="Simpson M."/>
            <person name="Skupski M.P."/>
            <person name="Smith T.J."/>
            <person name="Spier E."/>
            <person name="Spradling A.C."/>
            <person name="Stapleton M."/>
            <person name="Strong R."/>
            <person name="Sun E."/>
            <person name="Svirskas R."/>
            <person name="Tector C."/>
            <person name="Turner R."/>
            <person name="Venter E."/>
            <person name="Wang A.H."/>
            <person name="Wang X."/>
            <person name="Wang Z.-Y."/>
            <person name="Wassarman D.A."/>
            <person name="Weinstock G.M."/>
            <person name="Weissenbach J."/>
            <person name="Williams S.M."/>
            <person name="Woodage T."/>
            <person name="Worley K.C."/>
            <person name="Wu D."/>
            <person name="Yang S."/>
            <person name="Yao Q.A."/>
            <person name="Ye J."/>
            <person name="Yeh R.-F."/>
            <person name="Zaveri J.S."/>
            <person name="Zhan M."/>
            <person name="Zhang G."/>
            <person name="Zhao Q."/>
            <person name="Zheng L."/>
            <person name="Zheng X.H."/>
            <person name="Zhong F.N."/>
            <person name="Zhong W."/>
            <person name="Zhou X."/>
            <person name="Zhu S.C."/>
            <person name="Zhu X."/>
            <person name="Smith H.O."/>
            <person name="Gibbs R.A."/>
            <person name="Myers E.W."/>
            <person name="Rubin G.M."/>
            <person name="Venter J.C."/>
        </authorList>
    </citation>
    <scope>NUCLEOTIDE SEQUENCE [LARGE SCALE GENOMIC DNA]</scope>
    <source>
        <strain>Berkeley</strain>
    </source>
</reference>
<reference key="2">
    <citation type="journal article" date="2002" name="Genome Biol.">
        <title>Annotation of the Drosophila melanogaster euchromatic genome: a systematic review.</title>
        <authorList>
            <person name="Misra S."/>
            <person name="Crosby M.A."/>
            <person name="Mungall C.J."/>
            <person name="Matthews B.B."/>
            <person name="Campbell K.S."/>
            <person name="Hradecky P."/>
            <person name="Huang Y."/>
            <person name="Kaminker J.S."/>
            <person name="Millburn G.H."/>
            <person name="Prochnik S.E."/>
            <person name="Smith C.D."/>
            <person name="Tupy J.L."/>
            <person name="Whitfield E.J."/>
            <person name="Bayraktaroglu L."/>
            <person name="Berman B.P."/>
            <person name="Bettencourt B.R."/>
            <person name="Celniker S.E."/>
            <person name="de Grey A.D.N.J."/>
            <person name="Drysdale R.A."/>
            <person name="Harris N.L."/>
            <person name="Richter J."/>
            <person name="Russo S."/>
            <person name="Schroeder A.J."/>
            <person name="Shu S.Q."/>
            <person name="Stapleton M."/>
            <person name="Yamada C."/>
            <person name="Ashburner M."/>
            <person name="Gelbart W.M."/>
            <person name="Rubin G.M."/>
            <person name="Lewis S.E."/>
        </authorList>
    </citation>
    <scope>GENOME REANNOTATION</scope>
    <source>
        <strain>Berkeley</strain>
    </source>
</reference>
<reference key="3">
    <citation type="journal article" date="2000" name="Science">
        <title>Candidate taste receptors in Drosophila.</title>
        <authorList>
            <person name="Clyne P.J."/>
            <person name="Warr C.G."/>
            <person name="Carlson J.R."/>
        </authorList>
    </citation>
    <scope>IDENTIFICATION</scope>
    <scope>TISSUE SPECIFICITY</scope>
</reference>
<reference key="4">
    <citation type="journal article" date="2001" name="Curr. Biol.">
        <title>Spatially restricted expression of candidate taste receptors in the Drosophila gustatory system.</title>
        <authorList>
            <person name="Dunipace L."/>
            <person name="Meister S."/>
            <person name="McNealy C."/>
            <person name="Amrein H."/>
        </authorList>
    </citation>
    <scope>IDENTIFICATION</scope>
</reference>
<reference key="5">
    <citation type="journal article" date="2008" name="Nat. Neurosci.">
        <title>Suppression of male courtship by a Drosophila pheromone receptor.</title>
        <authorList>
            <person name="Miyamoto T."/>
            <person name="Amrein H."/>
        </authorList>
    </citation>
    <scope>TISSUE SPECIFICITY</scope>
    <scope>FUNCTION</scope>
    <scope>DISRUPTION PHENOTYPE</scope>
</reference>
<reference key="6">
    <citation type="journal article" date="2010" name="Curr. Biol.">
        <title>The shaping of male courtship posture by lateralized gustatory inputs to male-specific interneurons.</title>
        <authorList>
            <person name="Koganezawa M."/>
            <person name="Haba D."/>
            <person name="Matsuo T."/>
            <person name="Yamamoto D."/>
        </authorList>
    </citation>
    <scope>TISSUE SPECIFICITY</scope>
    <scope>FUNCTION</scope>
    <scope>DISRUPTION PHENOTYPE</scope>
</reference>
<reference key="7">
    <citation type="journal article" date="2010" name="Neuron">
        <title>Avoiding DEET through insect gustatory receptors.</title>
        <authorList>
            <person name="Lee Y."/>
            <person name="Kim S.H."/>
            <person name="Montell C."/>
        </authorList>
    </citation>
    <scope>FUNCTION</scope>
    <scope>DISRUPTION PHENOTYPE</scope>
</reference>
<reference key="8">
    <citation type="journal article" date="2011" name="J. Neurosci.">
        <title>Molecular and cellular organization of the taste system in the Drosophila larva.</title>
        <authorList>
            <person name="Kwon J.Y."/>
            <person name="Dahanukar A."/>
            <person name="Weiss L.A."/>
            <person name="Carlson J.R."/>
        </authorList>
    </citation>
    <scope>TISSUE SPECIFICITY</scope>
</reference>
<reference key="9">
    <citation type="journal article" date="2011" name="Nat. Neurosci.">
        <title>Hierarchical chemosensory regulation of male-male social interactions in Drosophila.</title>
        <authorList>
            <person name="Wang L."/>
            <person name="Han X."/>
            <person name="Mehren J."/>
            <person name="Hiroi M."/>
            <person name="Billeter J.C."/>
            <person name="Miyamoto T."/>
            <person name="Amrein H."/>
            <person name="Levine J.D."/>
            <person name="Anderson D.J."/>
        </authorList>
    </citation>
    <scope>FUNCTION</scope>
    <scope>DISRUPTION PHENOTYPE</scope>
</reference>
<reference key="10">
    <citation type="journal article" date="2012" name="J. Neurogenet.">
        <title>Automated quantification of locomotion, social interaction, and mate preference in Drosophila mutants.</title>
        <authorList>
            <person name="Iyengar A."/>
            <person name="Imoehl J."/>
            <person name="Ueda A."/>
            <person name="Nirschl J."/>
            <person name="Wu C.F."/>
        </authorList>
    </citation>
    <scope>FUNCTION</scope>
</reference>
<reference key="11">
    <citation type="journal article" date="2013" name="Cell">
        <title>Genetic and neural mechanisms that inhibit Drosophila from mating with other species.</title>
        <authorList>
            <person name="Fan P."/>
            <person name="Manoli D.S."/>
            <person name="Ahmed O.M."/>
            <person name="Chen Y."/>
            <person name="Agarwal N."/>
            <person name="Kwong S."/>
            <person name="Cai A.G."/>
            <person name="Neitz J."/>
            <person name="Renslo A."/>
            <person name="Baker B.S."/>
            <person name="Shah N.M."/>
        </authorList>
    </citation>
    <scope>TISSUE SPECIFICITY</scope>
    <scope>FUNCTION</scope>
    <scope>DISRUPTION PHENOTYPE</scope>
</reference>
<gene>
    <name type="primary">Gr32a</name>
    <name type="synonym">GR32D.1</name>
    <name type="ORF">CG14916</name>
</gene>
<protein>
    <recommendedName>
        <fullName>Gustatory and pheromone receptor 32a</fullName>
    </recommendedName>
</protein>
<sequence>MSPNTWVIEMPTQKTRSHPYPRRISPYRPPVLNRDAFSRDAPPMPARNHDHPVFEDIRTILSVLKASGLMPIYEQVSDYEVGPPTKTNEFYSFFVRGVVHALTIFNVYSLFTPISAQLFFSYRETDNVNQWIELLLCILTYTLTVFVCAHNTTSMLRIMNEILQLDEEVRRQFGANLSQNFGFLVKFLVGITACQAYIIVLKIYAVQGEITPTSYILLAFYGIQNGLTATYIVFASALLRIVYIRFHFINQLLNGYTYGQQHRRKEGGARARRQRGDVNPNVNPALMEHFPEDSLFIYRMHNKLLRIYKGINDCCNLILVSFLGYSFYTVTTNCYNLFVQITGKGMVSPNILQWCFAWLCLHVSLLALLSRSCGLTTTEANATSQILARVYAKSKEYQNIIDKFLTKSIKQEVQFTAYGFFAIDNSTLFKIFSAVTTYLVILIQFKQLEDSKVEDPVPEQT</sequence>
<dbReference type="EMBL" id="AE014134">
    <property type="protein sequence ID" value="AAF53071.3"/>
    <property type="molecule type" value="Genomic_DNA"/>
</dbReference>
<dbReference type="RefSeq" id="NP_523543.3">
    <property type="nucleotide sequence ID" value="NM_078819.5"/>
</dbReference>
<dbReference type="SMR" id="Q9VKJ7"/>
<dbReference type="BioGRID" id="60607">
    <property type="interactions" value="1"/>
</dbReference>
<dbReference type="FunCoup" id="Q9VKJ7">
    <property type="interactions" value="4"/>
</dbReference>
<dbReference type="STRING" id="7227.FBpp0079787"/>
<dbReference type="PaxDb" id="7227-FBpp0079787"/>
<dbReference type="EnsemblMetazoa" id="FBtr0080198">
    <property type="protein sequence ID" value="FBpp0079787"/>
    <property type="gene ID" value="FBgn0041246"/>
</dbReference>
<dbReference type="GeneID" id="34545"/>
<dbReference type="KEGG" id="dme:Dmel_CG14916"/>
<dbReference type="AGR" id="FB:FBgn0041246"/>
<dbReference type="CTD" id="34545"/>
<dbReference type="FlyBase" id="FBgn0041246">
    <property type="gene designation" value="Gr32a"/>
</dbReference>
<dbReference type="VEuPathDB" id="VectorBase:FBgn0041246"/>
<dbReference type="eggNOG" id="ENOG502T08N">
    <property type="taxonomic scope" value="Eukaryota"/>
</dbReference>
<dbReference type="GeneTree" id="ENSGT00940000166130"/>
<dbReference type="HOGENOM" id="CLU_058693_0_0_1"/>
<dbReference type="InParanoid" id="Q9VKJ7"/>
<dbReference type="OMA" id="AWLCLHV"/>
<dbReference type="OrthoDB" id="6366728at2759"/>
<dbReference type="PhylomeDB" id="Q9VKJ7"/>
<dbReference type="BioGRID-ORCS" id="34545">
    <property type="hits" value="0 hits in 1 CRISPR screen"/>
</dbReference>
<dbReference type="GenomeRNAi" id="34545"/>
<dbReference type="PRO" id="PR:Q9VKJ7"/>
<dbReference type="Proteomes" id="UP000000803">
    <property type="component" value="Chromosome 2L"/>
</dbReference>
<dbReference type="Bgee" id="FBgn0041246">
    <property type="expression patterns" value="Expressed in mid-late elongation-stage spermatid (Drosophila) in testis and 4 other cell types or tissues"/>
</dbReference>
<dbReference type="GO" id="GO:0030424">
    <property type="term" value="C:axon"/>
    <property type="evidence" value="ECO:0000318"/>
    <property type="project" value="GO_Central"/>
</dbReference>
<dbReference type="GO" id="GO:0030425">
    <property type="term" value="C:dendrite"/>
    <property type="evidence" value="ECO:0000318"/>
    <property type="project" value="GO_Central"/>
</dbReference>
<dbReference type="GO" id="GO:0016020">
    <property type="term" value="C:membrane"/>
    <property type="evidence" value="ECO:0000303"/>
    <property type="project" value="UniProtKB"/>
</dbReference>
<dbReference type="GO" id="GO:0043025">
    <property type="term" value="C:neuronal cell body"/>
    <property type="evidence" value="ECO:0000318"/>
    <property type="project" value="GO_Central"/>
</dbReference>
<dbReference type="GO" id="GO:0005886">
    <property type="term" value="C:plasma membrane"/>
    <property type="evidence" value="ECO:0000250"/>
    <property type="project" value="FlyBase"/>
</dbReference>
<dbReference type="GO" id="GO:0170021">
    <property type="term" value="F:ionotropic taste receptor activity"/>
    <property type="evidence" value="ECO:0000315"/>
    <property type="project" value="FlyBase"/>
</dbReference>
<dbReference type="GO" id="GO:0015276">
    <property type="term" value="F:ligand-gated monoatomic ion channel activity"/>
    <property type="evidence" value="ECO:0000250"/>
    <property type="project" value="FlyBase"/>
</dbReference>
<dbReference type="GO" id="GO:0008527">
    <property type="term" value="F:taste receptor activity"/>
    <property type="evidence" value="ECO:0000303"/>
    <property type="project" value="UniProtKB"/>
</dbReference>
<dbReference type="GO" id="GO:0007635">
    <property type="term" value="P:chemosensory behavior"/>
    <property type="evidence" value="ECO:0000318"/>
    <property type="project" value="GO_Central"/>
</dbReference>
<dbReference type="GO" id="GO:0001580">
    <property type="term" value="P:detection of chemical stimulus involved in sensory perception of bitter taste"/>
    <property type="evidence" value="ECO:0000315"/>
    <property type="project" value="FlyBase"/>
</dbReference>
<dbReference type="GO" id="GO:0008049">
    <property type="term" value="P:male courtship behavior"/>
    <property type="evidence" value="ECO:0000315"/>
    <property type="project" value="FlyBase"/>
</dbReference>
<dbReference type="GO" id="GO:0034220">
    <property type="term" value="P:monoatomic ion transmembrane transport"/>
    <property type="evidence" value="ECO:0000250"/>
    <property type="project" value="FlyBase"/>
</dbReference>
<dbReference type="GO" id="GO:0009636">
    <property type="term" value="P:response to toxic substance"/>
    <property type="evidence" value="ECO:0000315"/>
    <property type="project" value="FlyBase"/>
</dbReference>
<dbReference type="GO" id="GO:0050913">
    <property type="term" value="P:sensory perception of bitter taste"/>
    <property type="evidence" value="ECO:0000315"/>
    <property type="project" value="FlyBase"/>
</dbReference>
<dbReference type="GO" id="GO:0050909">
    <property type="term" value="P:sensory perception of taste"/>
    <property type="evidence" value="ECO:0000303"/>
    <property type="project" value="UniProtKB"/>
</dbReference>
<dbReference type="GO" id="GO:0007165">
    <property type="term" value="P:signal transduction"/>
    <property type="evidence" value="ECO:0007669"/>
    <property type="project" value="UniProtKB-KW"/>
</dbReference>
<dbReference type="InterPro" id="IPR013604">
    <property type="entry name" value="7TM_chemorcpt"/>
</dbReference>
<dbReference type="PANTHER" id="PTHR21143:SF133">
    <property type="entry name" value="GUSTATORY AND PHEROMONE RECEPTOR 32A-RELATED"/>
    <property type="match status" value="1"/>
</dbReference>
<dbReference type="PANTHER" id="PTHR21143">
    <property type="entry name" value="INVERTEBRATE GUSTATORY RECEPTOR"/>
    <property type="match status" value="1"/>
</dbReference>
<dbReference type="Pfam" id="PF08395">
    <property type="entry name" value="7tm_7"/>
    <property type="match status" value="1"/>
</dbReference>
<accession>Q9VKJ7</accession>
<evidence type="ECO:0000250" key="1"/>
<evidence type="ECO:0000255" key="2"/>
<evidence type="ECO:0000269" key="3">
    <source>
    </source>
</evidence>
<evidence type="ECO:0000269" key="4">
    <source>
    </source>
</evidence>
<evidence type="ECO:0000269" key="5">
    <source>
    </source>
</evidence>
<evidence type="ECO:0000269" key="6">
    <source>
    </source>
</evidence>
<evidence type="ECO:0000269" key="7">
    <source>
    </source>
</evidence>
<evidence type="ECO:0000269" key="8">
    <source>
    </source>
</evidence>
<evidence type="ECO:0000269" key="9">
    <source>
    </source>
</evidence>
<evidence type="ECO:0000269" key="10">
    <source>
    </source>
</evidence>
<evidence type="ECO:0000305" key="11"/>
<comment type="function">
    <text evidence="4 5 6 7 9 10">Gustatory receptor which mediates acceptance or avoidance behavior, depending on its substrates. Required for the response to N,N-Diethyl-meta-toluamide (DEET), the most widely used insect repellent worldwide. Functions as a pheromone receptor for a male inhibitory pheromone and promotes male-male aggression and suppresses male-male courtship. Also promotes preferentially virgin females courting over mated females.</text>
</comment>
<comment type="subcellular location">
    <subcellularLocation>
        <location evidence="1">Cell membrane</location>
        <topology evidence="1">Multi-pass membrane protein</topology>
    </subcellularLocation>
</comment>
<comment type="tissue specificity">
    <text evidence="3 4 5 8 10">Expressed in the adult labellar chemosensory neurons. Expressed in tarsal neurons for male-male courtship suppression. In larvae, is expressed in neurons of the terminal external chemosensory organ, and the dorsal and posterior external chemosensory organs.</text>
</comment>
<comment type="disruption phenotype">
    <text evidence="4 5 6 7 10">Impairs avoiding N,N-Diethyl-meta-toluamide (DEET). Leads to high male courtship toward males and mated females. Also leads to diminished aggression level of males.</text>
</comment>
<comment type="similarity">
    <text evidence="11">Belongs to the insect chemoreceptor superfamily. Gustatory receptor (GR) family. Gr21a subfamily.</text>
</comment>
<keyword id="KW-1003">Cell membrane</keyword>
<keyword id="KW-0472">Membrane</keyword>
<keyword id="KW-0675">Receptor</keyword>
<keyword id="KW-1185">Reference proteome</keyword>
<keyword id="KW-0807">Transducer</keyword>
<keyword id="KW-0812">Transmembrane</keyword>
<keyword id="KW-1133">Transmembrane helix</keyword>